<organism>
    <name type="scientific">Escherichia coli (strain K12)</name>
    <dbReference type="NCBI Taxonomy" id="83333"/>
    <lineage>
        <taxon>Bacteria</taxon>
        <taxon>Pseudomonadati</taxon>
        <taxon>Pseudomonadota</taxon>
        <taxon>Gammaproteobacteria</taxon>
        <taxon>Enterobacterales</taxon>
        <taxon>Enterobacteriaceae</taxon>
        <taxon>Escherichia</taxon>
    </lineage>
</organism>
<feature type="chain" id="PRO_0000023073" description="Aspartate 1-decarboxylase beta chain">
    <location>
        <begin position="1"/>
        <end position="24"/>
    </location>
</feature>
<feature type="chain" id="PRO_0000023074" description="Aspartate 1-decarboxylase alpha chain">
    <location>
        <begin position="25"/>
        <end position="126"/>
    </location>
</feature>
<feature type="active site" description="Schiff-base intermediate with substrate; via pyruvic acid" evidence="5">
    <location>
        <position position="25"/>
    </location>
</feature>
<feature type="active site" description="Proton donor">
    <location>
        <position position="58"/>
    </location>
</feature>
<feature type="binding site" evidence="1">
    <location>
        <position position="57"/>
    </location>
    <ligand>
        <name>substrate</name>
    </ligand>
</feature>
<feature type="binding site" evidence="1">
    <location>
        <begin position="73"/>
        <end position="75"/>
    </location>
    <ligand>
        <name>substrate</name>
    </ligand>
</feature>
<feature type="modified residue" description="Pyruvic acid (Ser)" evidence="5">
    <location>
        <position position="25"/>
    </location>
</feature>
<feature type="sequence conflict" description="In Ref. 2." evidence="6" ref="2">
    <original>Y</original>
    <variation>N</variation>
    <location>
        <position position="107"/>
    </location>
</feature>
<feature type="sequence conflict" description="In Ref. 2." evidence="6" ref="2">
    <original>AI</original>
    <variation>TV</variation>
    <location>
        <begin position="120"/>
        <end position="121"/>
    </location>
</feature>
<feature type="strand" evidence="11">
    <location>
        <begin position="2"/>
        <end position="14"/>
    </location>
</feature>
<feature type="strand" evidence="11">
    <location>
        <begin position="17"/>
        <end position="19"/>
    </location>
</feature>
<feature type="strand" evidence="10">
    <location>
        <begin position="20"/>
        <end position="22"/>
    </location>
</feature>
<feature type="strand" evidence="11">
    <location>
        <begin position="27"/>
        <end position="29"/>
    </location>
</feature>
<feature type="helix" evidence="11">
    <location>
        <begin position="30"/>
        <end position="36"/>
    </location>
</feature>
<feature type="strand" evidence="11">
    <location>
        <begin position="43"/>
        <end position="48"/>
    </location>
</feature>
<feature type="turn" evidence="11">
    <location>
        <begin position="49"/>
        <end position="51"/>
    </location>
</feature>
<feature type="strand" evidence="11">
    <location>
        <begin position="54"/>
        <end position="58"/>
    </location>
</feature>
<feature type="strand" evidence="11">
    <location>
        <begin position="60"/>
        <end position="62"/>
    </location>
</feature>
<feature type="strand" evidence="11">
    <location>
        <begin position="69"/>
        <end position="72"/>
    </location>
</feature>
<feature type="helix" evidence="11">
    <location>
        <begin position="73"/>
        <end position="78"/>
    </location>
</feature>
<feature type="strand" evidence="11">
    <location>
        <begin position="84"/>
        <end position="94"/>
    </location>
</feature>
<feature type="helix" evidence="11">
    <location>
        <begin position="95"/>
        <end position="98"/>
    </location>
</feature>
<feature type="strand" evidence="11">
    <location>
        <begin position="104"/>
        <end position="109"/>
    </location>
</feature>
<feature type="turn" evidence="11">
    <location>
        <begin position="110"/>
        <end position="112"/>
    </location>
</feature>
<feature type="strand" evidence="11">
    <location>
        <begin position="113"/>
        <end position="119"/>
    </location>
</feature>
<sequence>MIRTMLQGKLHRVKVTHADLHYEGSCAIDQDFLDAAGILENEAIDIWNVTNGKRFSTYAIAAERGSRIISVNGAAAHCASVGDIVIIASFVTMPDEEARTWRPNVAYFEGDNEMKRTAKAIPVQVA</sequence>
<evidence type="ECO:0000250" key="1"/>
<evidence type="ECO:0000269" key="2">
    <source>
    </source>
</evidence>
<evidence type="ECO:0000269" key="3">
    <source>
    </source>
</evidence>
<evidence type="ECO:0000269" key="4">
    <source>
    </source>
</evidence>
<evidence type="ECO:0000269" key="5">
    <source>
    </source>
</evidence>
<evidence type="ECO:0000305" key="6"/>
<evidence type="ECO:0007744" key="7">
    <source>
        <dbReference type="PDB" id="4CRY"/>
    </source>
</evidence>
<evidence type="ECO:0007744" key="8">
    <source>
        <dbReference type="PDB" id="4CRZ"/>
    </source>
</evidence>
<evidence type="ECO:0007744" key="9">
    <source>
        <dbReference type="PDB" id="4CS0"/>
    </source>
</evidence>
<evidence type="ECO:0007829" key="10">
    <source>
        <dbReference type="PDB" id="1PQH"/>
    </source>
</evidence>
<evidence type="ECO:0007829" key="11">
    <source>
        <dbReference type="PDB" id="5LS7"/>
    </source>
</evidence>
<keyword id="KW-0002">3D-structure</keyword>
<keyword id="KW-0068">Autocatalytic cleavage</keyword>
<keyword id="KW-0963">Cytoplasm</keyword>
<keyword id="KW-0210">Decarboxylase</keyword>
<keyword id="KW-0903">Direct protein sequencing</keyword>
<keyword id="KW-0456">Lyase</keyword>
<keyword id="KW-0566">Pantothenate biosynthesis</keyword>
<keyword id="KW-0670">Pyruvate</keyword>
<keyword id="KW-1185">Reference proteome</keyword>
<keyword id="KW-0704">Schiff base</keyword>
<keyword id="KW-0865">Zymogen</keyword>
<dbReference type="EC" id="4.1.1.11"/>
<dbReference type="EMBL" id="L17086">
    <property type="protein sequence ID" value="AAA24274.1"/>
    <property type="molecule type" value="Genomic_DNA"/>
</dbReference>
<dbReference type="EMBL" id="U00096">
    <property type="protein sequence ID" value="AAC73242.1"/>
    <property type="molecule type" value="Genomic_DNA"/>
</dbReference>
<dbReference type="EMBL" id="AP009048">
    <property type="protein sequence ID" value="BAB96708.2"/>
    <property type="molecule type" value="Genomic_DNA"/>
</dbReference>
<dbReference type="PIR" id="C64736">
    <property type="entry name" value="C64736"/>
</dbReference>
<dbReference type="RefSeq" id="NP_414673.1">
    <property type="nucleotide sequence ID" value="NC_000913.3"/>
</dbReference>
<dbReference type="RefSeq" id="WP_000621515.1">
    <property type="nucleotide sequence ID" value="NZ_STEB01000010.1"/>
</dbReference>
<dbReference type="PDB" id="1AW8">
    <property type="method" value="X-ray"/>
    <property type="resolution" value="2.20 A"/>
    <property type="chains" value="A/D=1-24, B/E=25-115"/>
</dbReference>
<dbReference type="PDB" id="1PPY">
    <property type="method" value="X-ray"/>
    <property type="resolution" value="1.95 A"/>
    <property type="chains" value="A/B=1-126"/>
</dbReference>
<dbReference type="PDB" id="1PQE">
    <property type="method" value="X-ray"/>
    <property type="resolution" value="1.95 A"/>
    <property type="chains" value="A=1-126"/>
</dbReference>
<dbReference type="PDB" id="1PQF">
    <property type="method" value="X-ray"/>
    <property type="resolution" value="2.00 A"/>
    <property type="chains" value="A/B=1-126"/>
</dbReference>
<dbReference type="PDB" id="1PQH">
    <property type="method" value="X-ray"/>
    <property type="resolution" value="1.29 A"/>
    <property type="chains" value="A/B=1-126"/>
</dbReference>
<dbReference type="PDB" id="1PT0">
    <property type="method" value="X-ray"/>
    <property type="resolution" value="2.00 A"/>
    <property type="chains" value="A/B=1-126"/>
</dbReference>
<dbReference type="PDB" id="1PT1">
    <property type="method" value="X-ray"/>
    <property type="resolution" value="1.90 A"/>
    <property type="chains" value="A/B=1-126"/>
</dbReference>
<dbReference type="PDB" id="1PYQ">
    <property type="method" value="X-ray"/>
    <property type="resolution" value="1.90 A"/>
    <property type="chains" value="A/B=1-126"/>
</dbReference>
<dbReference type="PDB" id="1PYU">
    <property type="method" value="X-ray"/>
    <property type="resolution" value="1.90 A"/>
    <property type="chains" value="A/C=1-24, B/D=25-126"/>
</dbReference>
<dbReference type="PDB" id="3TM7">
    <property type="method" value="X-ray"/>
    <property type="resolution" value="1.70 A"/>
    <property type="chains" value="A/C=1-24, B/D=25-126"/>
</dbReference>
<dbReference type="PDB" id="4AOK">
    <property type="method" value="X-ray"/>
    <property type="resolution" value="1.50 A"/>
    <property type="chains" value="A/D=1-24, B/E=26-126"/>
</dbReference>
<dbReference type="PDB" id="4AON">
    <property type="method" value="X-ray"/>
    <property type="resolution" value="1.50 A"/>
    <property type="chains" value="A/D=1-24, B/E=25-126"/>
</dbReference>
<dbReference type="PDB" id="4AZD">
    <property type="method" value="X-ray"/>
    <property type="resolution" value="1.62 A"/>
    <property type="chains" value="A/B=1-126"/>
</dbReference>
<dbReference type="PDB" id="4CRY">
    <property type="method" value="X-ray"/>
    <property type="resolution" value="1.61 A"/>
    <property type="chains" value="A=1-24, G=25-126"/>
</dbReference>
<dbReference type="PDB" id="4CRZ">
    <property type="method" value="X-ray"/>
    <property type="resolution" value="1.70 A"/>
    <property type="chains" value="A=1-126"/>
</dbReference>
<dbReference type="PDB" id="4CS0">
    <property type="method" value="X-ray"/>
    <property type="resolution" value="2.10 A"/>
    <property type="chains" value="A=1-126"/>
</dbReference>
<dbReference type="PDB" id="4D7Z">
    <property type="method" value="X-ray"/>
    <property type="resolution" value="1.90 A"/>
    <property type="chains" value="A=1-24, B=26-119"/>
</dbReference>
<dbReference type="PDB" id="5LS7">
    <property type="method" value="X-ray"/>
    <property type="resolution" value="1.16 A"/>
    <property type="chains" value="A=1-24, D=25-126"/>
</dbReference>
<dbReference type="PDBsum" id="1AW8"/>
<dbReference type="PDBsum" id="1PPY"/>
<dbReference type="PDBsum" id="1PQE"/>
<dbReference type="PDBsum" id="1PQF"/>
<dbReference type="PDBsum" id="1PQH"/>
<dbReference type="PDBsum" id="1PT0"/>
<dbReference type="PDBsum" id="1PT1"/>
<dbReference type="PDBsum" id="1PYQ"/>
<dbReference type="PDBsum" id="1PYU"/>
<dbReference type="PDBsum" id="3TM7"/>
<dbReference type="PDBsum" id="4AOK"/>
<dbReference type="PDBsum" id="4AON"/>
<dbReference type="PDBsum" id="4AZD"/>
<dbReference type="PDBsum" id="4CRY"/>
<dbReference type="PDBsum" id="4CRZ"/>
<dbReference type="PDBsum" id="4CS0"/>
<dbReference type="PDBsum" id="4D7Z"/>
<dbReference type="PDBsum" id="5LS7"/>
<dbReference type="SMR" id="P0A790"/>
<dbReference type="BioGRID" id="4259730">
    <property type="interactions" value="215"/>
</dbReference>
<dbReference type="FunCoup" id="P0A790">
    <property type="interactions" value="456"/>
</dbReference>
<dbReference type="IntAct" id="P0A790">
    <property type="interactions" value="2"/>
</dbReference>
<dbReference type="STRING" id="511145.b0131"/>
<dbReference type="jPOST" id="P0A790"/>
<dbReference type="PaxDb" id="511145-b0131"/>
<dbReference type="EnsemblBacteria" id="AAC73242">
    <property type="protein sequence ID" value="AAC73242"/>
    <property type="gene ID" value="b0131"/>
</dbReference>
<dbReference type="GeneID" id="93777305"/>
<dbReference type="GeneID" id="945686"/>
<dbReference type="KEGG" id="ecj:JW0127"/>
<dbReference type="KEGG" id="eco:b0131"/>
<dbReference type="KEGG" id="ecoc:C3026_00560"/>
<dbReference type="PATRIC" id="fig|1411691.4.peg.2151"/>
<dbReference type="EchoBASE" id="EB1697"/>
<dbReference type="eggNOG" id="COG0853">
    <property type="taxonomic scope" value="Bacteria"/>
</dbReference>
<dbReference type="HOGENOM" id="CLU_115305_2_1_6"/>
<dbReference type="InParanoid" id="P0A790"/>
<dbReference type="OMA" id="MLYSKIH"/>
<dbReference type="OrthoDB" id="9803983at2"/>
<dbReference type="PhylomeDB" id="P0A790"/>
<dbReference type="BioCyc" id="EcoCyc:ASPDECARBOX-MONOMER"/>
<dbReference type="BioCyc" id="MetaCyc:ASPDECARBOX-MONOMER"/>
<dbReference type="BRENDA" id="4.1.1.11">
    <property type="organism ID" value="2026"/>
</dbReference>
<dbReference type="SABIO-RK" id="P0A790"/>
<dbReference type="UniPathway" id="UPA00028">
    <property type="reaction ID" value="UER00002"/>
</dbReference>
<dbReference type="EvolutionaryTrace" id="P0A790"/>
<dbReference type="PRO" id="PR:P0A790"/>
<dbReference type="Proteomes" id="UP000000625">
    <property type="component" value="Chromosome"/>
</dbReference>
<dbReference type="GO" id="GO:0005829">
    <property type="term" value="C:cytosol"/>
    <property type="evidence" value="ECO:0000314"/>
    <property type="project" value="EcoCyc"/>
</dbReference>
<dbReference type="GO" id="GO:0004068">
    <property type="term" value="F:aspartate 1-decarboxylase activity"/>
    <property type="evidence" value="ECO:0000318"/>
    <property type="project" value="GO_Central"/>
</dbReference>
<dbReference type="GO" id="GO:0006523">
    <property type="term" value="P:alanine biosynthetic process"/>
    <property type="evidence" value="ECO:0000318"/>
    <property type="project" value="GO_Central"/>
</dbReference>
<dbReference type="GO" id="GO:0015940">
    <property type="term" value="P:pantothenate biosynthetic process"/>
    <property type="evidence" value="ECO:0000318"/>
    <property type="project" value="GO_Central"/>
</dbReference>
<dbReference type="GO" id="GO:0016540">
    <property type="term" value="P:protein autoprocessing"/>
    <property type="evidence" value="ECO:0000314"/>
    <property type="project" value="EcoCyc"/>
</dbReference>
<dbReference type="CDD" id="cd06919">
    <property type="entry name" value="Asp_decarbox"/>
    <property type="match status" value="1"/>
</dbReference>
<dbReference type="FunFam" id="2.40.40.20:FF:000004">
    <property type="entry name" value="Aspartate 1-decarboxylase"/>
    <property type="match status" value="1"/>
</dbReference>
<dbReference type="Gene3D" id="2.40.40.20">
    <property type="match status" value="1"/>
</dbReference>
<dbReference type="HAMAP" id="MF_00446">
    <property type="entry name" value="PanD"/>
    <property type="match status" value="1"/>
</dbReference>
<dbReference type="InterPro" id="IPR009010">
    <property type="entry name" value="Asp_de-COase-like_dom_sf"/>
</dbReference>
<dbReference type="InterPro" id="IPR003190">
    <property type="entry name" value="Asp_decarbox"/>
</dbReference>
<dbReference type="NCBIfam" id="TIGR00223">
    <property type="entry name" value="panD"/>
    <property type="match status" value="1"/>
</dbReference>
<dbReference type="PANTHER" id="PTHR21012">
    <property type="entry name" value="ASPARTATE 1-DECARBOXYLASE"/>
    <property type="match status" value="1"/>
</dbReference>
<dbReference type="PANTHER" id="PTHR21012:SF0">
    <property type="entry name" value="ASPARTATE 1-DECARBOXYLASE"/>
    <property type="match status" value="1"/>
</dbReference>
<dbReference type="Pfam" id="PF02261">
    <property type="entry name" value="Asp_decarbox"/>
    <property type="match status" value="1"/>
</dbReference>
<dbReference type="PIRSF" id="PIRSF006246">
    <property type="entry name" value="Asp_decarbox"/>
    <property type="match status" value="1"/>
</dbReference>
<dbReference type="SUPFAM" id="SSF50692">
    <property type="entry name" value="ADC-like"/>
    <property type="match status" value="1"/>
</dbReference>
<gene>
    <name type="primary">panD</name>
    <name type="ordered locus">b0131</name>
    <name type="ordered locus">JW0127</name>
</gene>
<comment type="function">
    <text evidence="4">Catalyzes the pyruvoyl-dependent decarboxylation of aspartate to produce beta-alanine.</text>
</comment>
<comment type="catalytic activity">
    <reaction evidence="4">
        <text>L-aspartate + H(+) = beta-alanine + CO2</text>
        <dbReference type="Rhea" id="RHEA:19497"/>
        <dbReference type="ChEBI" id="CHEBI:15378"/>
        <dbReference type="ChEBI" id="CHEBI:16526"/>
        <dbReference type="ChEBI" id="CHEBI:29991"/>
        <dbReference type="ChEBI" id="CHEBI:57966"/>
        <dbReference type="EC" id="4.1.1.11"/>
    </reaction>
</comment>
<comment type="cofactor">
    <cofactor>
        <name>pyruvate</name>
        <dbReference type="ChEBI" id="CHEBI:15361"/>
    </cofactor>
    <text>Binds 1 pyruvoyl group covalently per subunit.</text>
</comment>
<comment type="activity regulation">
    <text evidence="2 3 4">Inhibited by hydroxylamine, sodium borohydride, D-cycloserine, hydrazine, semicarbazine and succinic dehydrazine (PubMed:6767707). D-serine is a competitive inhibitor (PubMed:6767707). Cleavage and catalytic activity are regulated by PanZ in a coenzyme A (CoA)-dependent fashion (PubMed:23170229, PubMed:25910242).</text>
</comment>
<comment type="pathway">
    <text>Cofactor biosynthesis; (R)-pantothenate biosynthesis; beta-alanine from L-aspartate: step 1/1.</text>
</comment>
<comment type="subunit">
    <text evidence="2 3 5">Heterooctamer of four alpha and four beta subunits (PubMed:9546220). Interacts with PanZ (PubMed:23170229, PubMed:25910242).</text>
</comment>
<comment type="subcellular location">
    <subcellularLocation>
        <location evidence="4">Cytoplasm</location>
    </subcellularLocation>
</comment>
<comment type="PTM">
    <text>Is synthesized initially as an inactive proenzyme, which is activated by self-cleavage at a specific serine bond to produce a beta-subunit with a hydroxyl group at its C-terminus and an alpha-subunit with a pyruvoyl group at its N-terminus.</text>
</comment>
<comment type="similarity">
    <text evidence="6">Belongs to the PanD family.</text>
</comment>
<protein>
    <recommendedName>
        <fullName>Aspartate 1-decarboxylase</fullName>
        <ecNumber>4.1.1.11</ecNumber>
    </recommendedName>
    <alternativeName>
        <fullName>Aspartate alpha-decarboxylase</fullName>
    </alternativeName>
    <component>
        <recommendedName>
            <fullName>Aspartate 1-decarboxylase beta chain</fullName>
        </recommendedName>
    </component>
    <component>
        <recommendedName>
            <fullName>Aspartate 1-decarboxylase alpha chain</fullName>
        </recommendedName>
    </component>
</protein>
<name>PAND_ECOLI</name>
<proteinExistence type="evidence at protein level"/>
<reference key="1">
    <citation type="journal article" date="1996" name="FEMS Microbiol. Lett.">
        <title>Characterization and sequence of the Escherichia coli panBCD gene cluster.</title>
        <authorList>
            <person name="Merkel W.K."/>
            <person name="Nichols B.P."/>
        </authorList>
    </citation>
    <scope>NUCLEOTIDE SEQUENCE [GENOMIC DNA]</scope>
    <source>
        <strain>K12 / W3110 / ATCC 27325 / DSM 5911</strain>
    </source>
</reference>
<reference key="2">
    <citation type="journal article" date="1994" name="Nucleic Acids Res.">
        <title>Systematic sequencing of the Escherichia coli genome: analysis of the 2.4-4.1 min (110,917-193,643 bp) region.</title>
        <authorList>
            <person name="Fujita N."/>
            <person name="Mori H."/>
            <person name="Yura T."/>
            <person name="Ishihama A."/>
        </authorList>
    </citation>
    <scope>NUCLEOTIDE SEQUENCE [LARGE SCALE GENOMIC DNA]</scope>
    <source>
        <strain>K12 / W3110 / ATCC 27325 / DSM 5911</strain>
    </source>
</reference>
<reference key="3">
    <citation type="journal article" date="1997" name="Science">
        <title>The complete genome sequence of Escherichia coli K-12.</title>
        <authorList>
            <person name="Blattner F.R."/>
            <person name="Plunkett G. III"/>
            <person name="Bloch C.A."/>
            <person name="Perna N.T."/>
            <person name="Burland V."/>
            <person name="Riley M."/>
            <person name="Collado-Vides J."/>
            <person name="Glasner J.D."/>
            <person name="Rode C.K."/>
            <person name="Mayhew G.F."/>
            <person name="Gregor J."/>
            <person name="Davis N.W."/>
            <person name="Kirkpatrick H.A."/>
            <person name="Goeden M.A."/>
            <person name="Rose D.J."/>
            <person name="Mau B."/>
            <person name="Shao Y."/>
        </authorList>
    </citation>
    <scope>NUCLEOTIDE SEQUENCE [LARGE SCALE GENOMIC DNA]</scope>
    <source>
        <strain>K12 / MG1655 / ATCC 47076</strain>
    </source>
</reference>
<reference key="4">
    <citation type="journal article" date="2006" name="Mol. Syst. Biol.">
        <title>Highly accurate genome sequences of Escherichia coli K-12 strains MG1655 and W3110.</title>
        <authorList>
            <person name="Hayashi K."/>
            <person name="Morooka N."/>
            <person name="Yamamoto Y."/>
            <person name="Fujita K."/>
            <person name="Isono K."/>
            <person name="Choi S."/>
            <person name="Ohtsubo E."/>
            <person name="Baba T."/>
            <person name="Wanner B.L."/>
            <person name="Mori H."/>
            <person name="Horiuchi T."/>
        </authorList>
    </citation>
    <scope>NUCLEOTIDE SEQUENCE [LARGE SCALE GENOMIC DNA]</scope>
    <scope>SEQUENCE REVISION TO 107 AND 120-121</scope>
    <source>
        <strain>K12 / W3110 / ATCC 27325 / DSM 5911</strain>
    </source>
</reference>
<reference key="5">
    <citation type="journal article" date="1997" name="Biochem. J.">
        <title>Escherichia coli L-aspartate-alpha-decarboxylase: preprotein processing and observation of reaction intermediates by electrospray mass spectrometry.</title>
        <authorList>
            <person name="Ramjee M.K."/>
            <person name="Genschel U."/>
            <person name="Abell C."/>
            <person name="Smith A.G."/>
        </authorList>
    </citation>
    <scope>PROTEIN SEQUENCE OF 1-5 AND 25-29</scope>
    <scope>CHARACTERIZATION</scope>
</reference>
<reference key="6">
    <citation type="journal article" date="1980" name="J. Bacteriol.">
        <title>Beta-alanine synthesis in Escherichia coli.</title>
        <authorList>
            <person name="Cronan J.E. Jr."/>
        </authorList>
    </citation>
    <scope>FUNCTION</scope>
    <scope>ACTIVITY REGULATION</scope>
    <scope>CATALYTIC ACTIVITY</scope>
    <scope>BIOPHYSICOCHEMICAL PROPERTIES</scope>
    <scope>SUBCELLULAR LOCATION</scope>
</reference>
<reference key="7">
    <citation type="journal article" date="2001" name="Chem. Commun. (Camb.)">
        <title>Identification of Tyr58 as the proton donor in the aspartate-alpha-decarboxylase reaction.</title>
        <authorList>
            <person name="Saldanha S.A."/>
            <person name="Birch L.M."/>
            <person name="Webb M.E."/>
            <person name="Nabbs B.K."/>
            <person name="von Delft F."/>
            <person name="Smith A.G."/>
            <person name="Abell C."/>
        </authorList>
    </citation>
    <scope>ENZYME MECHANISM</scope>
</reference>
<reference key="8">
    <citation type="journal article" date="2012" name="MicrobiologyOpen">
        <title>An activator for pyruvoyl-dependent l-aspartate alpha-decarboxylase is conserved in a small group of the gamma-proteobacteria including Escherichia coli.</title>
        <authorList>
            <person name="Nozaki S."/>
            <person name="Webb M.E."/>
            <person name="Niki H."/>
        </authorList>
    </citation>
    <scope>ACTIVITY REGULATION</scope>
    <scope>INTERACTION WITH PANZ</scope>
    <source>
        <strain>K12 / MG1655 / ATCC 47076</strain>
    </source>
</reference>
<reference key="9">
    <citation type="journal article" date="1998" name="Nat. Struct. Biol.">
        <title>Crystal structure of aspartate decarboxylase at 2.2-A resolution provides evidence for an ester in protein self-processing.</title>
        <authorList>
            <person name="Albert A."/>
            <person name="Dhanaraj V."/>
            <person name="Genschel U."/>
            <person name="Khan G."/>
            <person name="Ramjee M.K."/>
            <person name="Pulido R."/>
            <person name="Sibanda B.L."/>
            <person name="von Delft F."/>
            <person name="Witty M."/>
            <person name="Blundell T.L."/>
            <person name="Smith A.G."/>
            <person name="Abell C."/>
        </authorList>
    </citation>
    <scope>X-RAY CRYSTALLOGRAPHY (2.2 ANGSTROMS) OF 1-115</scope>
    <scope>PROTEOLYTIC PROCESSING BY SELF</scope>
    <scope>SUBUNIT</scope>
    <scope>PYRUVATE FORMATION AT SER-25</scope>
</reference>
<reference key="10">
    <citation type="journal article" date="2003" name="EMBO J.">
        <title>Structural constraints on protein self-processing in L-aspartate-alpha-decarboxylase.</title>
        <authorList>
            <person name="Schmitzberger F."/>
            <person name="Kilkenny M.L."/>
            <person name="Lobley C.M.C."/>
            <person name="Webb M.E."/>
            <person name="Vinkovic M."/>
            <person name="Matak-Vinkovic D."/>
            <person name="Witty M."/>
            <person name="Chirgadze D.Y."/>
            <person name="Smith A.G."/>
            <person name="Abell C."/>
            <person name="Blundell T.L."/>
        </authorList>
    </citation>
    <scope>X-RAY CRYSTALLOGRAPHY (1.29 ANGSTROMS)</scope>
    <scope>PROTEOLYTIC PROCESSING BY SELF</scope>
</reference>
<reference evidence="7" key="11">
    <citation type="submission" date="2014-03" db="PDB data bank">
        <title>Direct visualisation of strain-induced protein post-translational modification.</title>
        <authorList>
            <person name="Monteiro D.C.F."/>
            <person name="Patel V."/>
            <person name="Bartlett C.P."/>
            <person name="Grant T.D."/>
            <person name="Nozaki S."/>
            <person name="Gowdy J.A."/>
            <person name="Snell E.H."/>
            <person name="Niki H."/>
            <person name="Pearson A.R."/>
            <person name="Webb M.E."/>
        </authorList>
    </citation>
    <scope>X-RAY CRYSTALLOGRAPHY (1.61 ANGSTROMS) OF 1-24 AND 25-126 IN COMPLEX WITH PANZ AND ACETYL COENZYME A</scope>
</reference>
<reference evidence="8 9" key="12">
    <citation type="journal article" date="2015" name="Chem. Biol.">
        <title>The structure of the PanD/PanZ protein complex reveals negative feedback regulation of pantothenate biosynthesis by coenzyme A.</title>
        <authorList>
            <person name="Monteiro D.C."/>
            <person name="Patel V."/>
            <person name="Bartlett C.P."/>
            <person name="Nozaki S."/>
            <person name="Grant T.D."/>
            <person name="Gowdy J.A."/>
            <person name="Thompson G.S."/>
            <person name="Kalverda A.P."/>
            <person name="Snell E.H."/>
            <person name="Niki H."/>
            <person name="Pearson A.R."/>
            <person name="Webb M.E."/>
        </authorList>
    </citation>
    <scope>X-RAY CRYSTALLOGRAPHY (1.70 ANGSTROMS) OF MUTANTS ALA-25 AND VAL-57 IN COMPLEXES WITH PANZ AND ACETYL COENZYME A</scope>
    <scope>ACTIVITY REGULATION</scope>
    <scope>INTERACTION WITH PANZ</scope>
</reference>
<accession>P0A790</accession>
<accession>P31664</accession>
<accession>Q8KMY8</accession>